<protein>
    <recommendedName>
        <fullName>Testis-expressed protein 2</fullName>
    </recommendedName>
</protein>
<organism>
    <name type="scientific">Mus musculus</name>
    <name type="common">Mouse</name>
    <dbReference type="NCBI Taxonomy" id="10090"/>
    <lineage>
        <taxon>Eukaryota</taxon>
        <taxon>Metazoa</taxon>
        <taxon>Chordata</taxon>
        <taxon>Craniata</taxon>
        <taxon>Vertebrata</taxon>
        <taxon>Euteleostomi</taxon>
        <taxon>Mammalia</taxon>
        <taxon>Eutheria</taxon>
        <taxon>Euarchontoglires</taxon>
        <taxon>Glires</taxon>
        <taxon>Rodentia</taxon>
        <taxon>Myomorpha</taxon>
        <taxon>Muroidea</taxon>
        <taxon>Muridae</taxon>
        <taxon>Murinae</taxon>
        <taxon>Mus</taxon>
        <taxon>Mus</taxon>
    </lineage>
</organism>
<keyword id="KW-0256">Endoplasmic reticulum</keyword>
<keyword id="KW-0325">Glycoprotein</keyword>
<keyword id="KW-0445">Lipid transport</keyword>
<keyword id="KW-0446">Lipid-binding</keyword>
<keyword id="KW-0472">Membrane</keyword>
<keyword id="KW-0539">Nucleus</keyword>
<keyword id="KW-0597">Phosphoprotein</keyword>
<keyword id="KW-1185">Reference proteome</keyword>
<keyword id="KW-0812">Transmembrane</keyword>
<keyword id="KW-1133">Transmembrane helix</keyword>
<keyword id="KW-0813">Transport</keyword>
<dbReference type="EMBL" id="AK129434">
    <property type="protein sequence ID" value="BAC98244.1"/>
    <property type="status" value="ALT_INIT"/>
    <property type="molecule type" value="mRNA"/>
</dbReference>
<dbReference type="EMBL" id="AL663053">
    <property type="status" value="NOT_ANNOTATED_CDS"/>
    <property type="molecule type" value="Genomic_DNA"/>
</dbReference>
<dbReference type="CCDS" id="CCDS25557.1"/>
<dbReference type="RefSeq" id="NP_938034.2">
    <property type="nucleotide sequence ID" value="NM_198292.3"/>
</dbReference>
<dbReference type="RefSeq" id="XP_006533206.1">
    <property type="nucleotide sequence ID" value="XM_006533143.4"/>
</dbReference>
<dbReference type="RefSeq" id="XP_006533207.1">
    <property type="nucleotide sequence ID" value="XM_006533144.4"/>
</dbReference>
<dbReference type="RefSeq" id="XP_006533208.1">
    <property type="nucleotide sequence ID" value="XM_006533145.2"/>
</dbReference>
<dbReference type="RefSeq" id="XP_006533209.1">
    <property type="nucleotide sequence ID" value="XM_006533146.5"/>
</dbReference>
<dbReference type="RefSeq" id="XP_006533210.1">
    <property type="nucleotide sequence ID" value="XM_006533147.4"/>
</dbReference>
<dbReference type="RefSeq" id="XP_036012514.1">
    <property type="nucleotide sequence ID" value="XM_036156621.1"/>
</dbReference>
<dbReference type="BioGRID" id="204128">
    <property type="interactions" value="5"/>
</dbReference>
<dbReference type="FunCoup" id="Q6ZPJ0">
    <property type="interactions" value="1578"/>
</dbReference>
<dbReference type="IntAct" id="Q6ZPJ0">
    <property type="interactions" value="1"/>
</dbReference>
<dbReference type="MINT" id="Q6ZPJ0"/>
<dbReference type="STRING" id="10090.ENSMUSP00000041985"/>
<dbReference type="GlyCosmos" id="Q6ZPJ0">
    <property type="glycosylation" value="1 site, No reported glycans"/>
</dbReference>
<dbReference type="GlyGen" id="Q6ZPJ0">
    <property type="glycosylation" value="5 sites, 2 N-linked glycans (2 sites), 1 O-linked glycan (2 sites)"/>
</dbReference>
<dbReference type="iPTMnet" id="Q6ZPJ0"/>
<dbReference type="PhosphoSitePlus" id="Q6ZPJ0"/>
<dbReference type="jPOST" id="Q6ZPJ0"/>
<dbReference type="PaxDb" id="10090-ENSMUSP00000041985"/>
<dbReference type="PeptideAtlas" id="Q6ZPJ0"/>
<dbReference type="ProteomicsDB" id="263108"/>
<dbReference type="Pumba" id="Q6ZPJ0"/>
<dbReference type="Antibodypedia" id="19114">
    <property type="antibodies" value="97 antibodies from 23 providers"/>
</dbReference>
<dbReference type="Ensembl" id="ENSMUST00000042780.14">
    <property type="protein sequence ID" value="ENSMUSP00000041985.8"/>
    <property type="gene ID" value="ENSMUSG00000040548.17"/>
</dbReference>
<dbReference type="GeneID" id="21763"/>
<dbReference type="KEGG" id="mmu:21763"/>
<dbReference type="UCSC" id="uc007lzb.1">
    <property type="organism name" value="mouse"/>
</dbReference>
<dbReference type="AGR" id="MGI:102465"/>
<dbReference type="CTD" id="55852"/>
<dbReference type="MGI" id="MGI:102465">
    <property type="gene designation" value="Tex2"/>
</dbReference>
<dbReference type="VEuPathDB" id="HostDB:ENSMUSG00000040548"/>
<dbReference type="eggNOG" id="KOG2238">
    <property type="taxonomic scope" value="Eukaryota"/>
</dbReference>
<dbReference type="GeneTree" id="ENSGT00390000000463"/>
<dbReference type="HOGENOM" id="CLU_008315_0_0_1"/>
<dbReference type="InParanoid" id="Q6ZPJ0"/>
<dbReference type="OMA" id="KRWNTGA"/>
<dbReference type="OrthoDB" id="26740at2759"/>
<dbReference type="PhylomeDB" id="Q6ZPJ0"/>
<dbReference type="TreeFam" id="TF314900"/>
<dbReference type="Reactome" id="R-MMU-8980692">
    <property type="pathway name" value="RHOA GTPase cycle"/>
</dbReference>
<dbReference type="BioGRID-ORCS" id="21763">
    <property type="hits" value="1 hit in 76 CRISPR screens"/>
</dbReference>
<dbReference type="ChiTaRS" id="Tex2">
    <property type="organism name" value="mouse"/>
</dbReference>
<dbReference type="PRO" id="PR:Q6ZPJ0"/>
<dbReference type="Proteomes" id="UP000000589">
    <property type="component" value="Chromosome 11"/>
</dbReference>
<dbReference type="RNAct" id="Q6ZPJ0">
    <property type="molecule type" value="protein"/>
</dbReference>
<dbReference type="Bgee" id="ENSMUSG00000040548">
    <property type="expression patterns" value="Expressed in spermatid and 245 other cell types or tissues"/>
</dbReference>
<dbReference type="ExpressionAtlas" id="Q6ZPJ0">
    <property type="expression patterns" value="baseline and differential"/>
</dbReference>
<dbReference type="GO" id="GO:0005789">
    <property type="term" value="C:endoplasmic reticulum membrane"/>
    <property type="evidence" value="ECO:0007669"/>
    <property type="project" value="UniProtKB-SubCell"/>
</dbReference>
<dbReference type="GO" id="GO:0031965">
    <property type="term" value="C:nuclear membrane"/>
    <property type="evidence" value="ECO:0007669"/>
    <property type="project" value="UniProtKB-SubCell"/>
</dbReference>
<dbReference type="GO" id="GO:0008289">
    <property type="term" value="F:lipid binding"/>
    <property type="evidence" value="ECO:0007669"/>
    <property type="project" value="UniProtKB-KW"/>
</dbReference>
<dbReference type="GO" id="GO:0006869">
    <property type="term" value="P:lipid transport"/>
    <property type="evidence" value="ECO:0007669"/>
    <property type="project" value="UniProtKB-KW"/>
</dbReference>
<dbReference type="CDD" id="cd21675">
    <property type="entry name" value="SMP_TEX2"/>
    <property type="match status" value="1"/>
</dbReference>
<dbReference type="InterPro" id="IPR031468">
    <property type="entry name" value="SMP_LBD"/>
</dbReference>
<dbReference type="PANTHER" id="PTHR13466:SF2">
    <property type="entry name" value="TESTIS-EXPRESSED PROTEIN 2"/>
    <property type="match status" value="1"/>
</dbReference>
<dbReference type="PANTHER" id="PTHR13466">
    <property type="entry name" value="TEX2 PROTEIN-RELATED"/>
    <property type="match status" value="1"/>
</dbReference>
<dbReference type="PROSITE" id="PS51847">
    <property type="entry name" value="SMP"/>
    <property type="match status" value="1"/>
</dbReference>
<name>TEX2_MOUSE</name>
<sequence>MTSLNGRHAEKTIDMPKPSAPKVHVQRSVSRDTIAIHFSASGEEEEEEEEEFRGYLEEGLDDQSIVTGLEAKEDLYLESQGGHDPAGPVSTAPADGLSVSESPAILPVSENTVKLLESPAPALQVLSPVPLALSPGSSSSGPLASSPSVSSLSEQKTSSSSPLSSPSKSPVLSSSASSSALSSAKPFMSLVKSLSTEVEPKESPHPPRHRHLMKTLVKSLSTDTSRQESDTVSYKPPDSKLNLHLFKQFTQPRNTGGDSKTAPSSPLTSPSDTRSFFKVPEMEAKIEDTKRRLSEVIYEPFQLLSKIIGEESGSHRPKALSASASELSSLSGLNGHLESNNYSIKEEEGDSEGEGYGSDSNTSRSDHLKPTEDASKEVEPKGSQASSLKDLGLKTSSLVLEKCSLSALVSKEDEEFCELYTEDFELETEGEGRLDKTLDLPLKPEVLASDGVALESEDEEDSATEHQELPVKTLGFFIMCVYAYLILPLPYYMSGLFLGVGLGFMTAVCMIWFFTPPSAHKHHKSLKALRHQSTRSLDIKEPEILKGWMNEIYNYDPETYHATLTHSVFVRLEGGTLRLSKPNKNISRRASYNETKPEVTYISQKIYDLSDSKIYLVPKSLARKRIWNKKYPICIELGRQDDFMSKAQSDKEATEEKPPPEKELPSEDLKKPPQPQEGTKSSQRDPILYLFGRTGREKEEWFRRFILASRLKSELRKPAGVSGSKSGLLPAHSRHSSPSGHLSHSRSSSKGSVEEMMSQPKQKELVGSVRQKMLLDYSVYMGRCVPQDNRSPHRSPVQSAESSPTASKKLPEAPPSEEEEQEAWVNALLGRIFWDFLGEKYWSDVVSKKIQMKLSKIKLPYFMNELTLTELDMGVAVPKILQAFKPYVDHQGLWIDLEMSYNGSFLMTLETKMNLTKLGKEPLVEALKVGEIGKEGCRPRAYCLADSDEESSSAGSSEEDDPPEPTAGDKQPLPGAEGYVGGHRTSKIMRFVDKITKSKYFQKATETEFIKKKIEEVSNTPLLLTVEVQECRGTLAVNIPPPPTDRIWYGFRKPPYVELKARPKLGEREVTLVHVTEWIEKKLEQELQKVFVMPNMDDVYIPIMHSAMDPRSTSCLLKEPPVETSDQL</sequence>
<gene>
    <name type="primary">Tex2</name>
    <name type="synonym">Kiaa1738</name>
</gene>
<proteinExistence type="evidence at protein level"/>
<comment type="function">
    <text evidence="2">During endoplasmic reticulum (ER) stress or when cellular ceramide levels increase, may induce contacts between the ER and medial-Golgi complex to facilitate non-vesicular transport of ceramides from the ER to the Golgi complex where they are converted to complex sphingolipids, preventing toxic ceramide accumulation.</text>
</comment>
<comment type="subcellular location">
    <subcellularLocation>
        <location evidence="1">Endoplasmic reticulum membrane</location>
        <topology evidence="3">Multi-pass membrane protein</topology>
    </subcellularLocation>
    <subcellularLocation>
        <location evidence="1">Nucleus membrane</location>
        <topology evidence="3">Multi-pass membrane protein</topology>
    </subcellularLocation>
    <text evidence="1 2">Enriched at the nucleus-vacuole junction (By similarity). During endoplasmic reticulum (ER) stress, localizes to ER-Golgi contacts (By similarity).</text>
</comment>
<comment type="domain">
    <text evidence="4">The SMP-LTD domain is a barrel-like domain that can bind various types of glycerophospholipids in its interior and mediate their transfer between two adjacent bilayers.</text>
</comment>
<comment type="sequence caution" evidence="6">
    <conflict type="erroneous initiation">
        <sequence resource="EMBL-CDS" id="BAC98244"/>
    </conflict>
</comment>
<evidence type="ECO:0000250" key="1">
    <source>
        <dbReference type="UniProtKB" id="Q06833"/>
    </source>
</evidence>
<evidence type="ECO:0000250" key="2">
    <source>
        <dbReference type="UniProtKB" id="Q8IWB9"/>
    </source>
</evidence>
<evidence type="ECO:0000255" key="3"/>
<evidence type="ECO:0000255" key="4">
    <source>
        <dbReference type="PROSITE-ProRule" id="PRU01194"/>
    </source>
</evidence>
<evidence type="ECO:0000256" key="5">
    <source>
        <dbReference type="SAM" id="MobiDB-lite"/>
    </source>
</evidence>
<evidence type="ECO:0000305" key="6"/>
<evidence type="ECO:0007744" key="7">
    <source>
    </source>
</evidence>
<evidence type="ECO:0007744" key="8">
    <source>
    </source>
</evidence>
<accession>Q6ZPJ0</accession>
<accession>B1ATR1</accession>
<reference key="1">
    <citation type="journal article" date="2003" name="DNA Res.">
        <title>Prediction of the coding sequences of mouse homologues of KIAA gene: III. The complete nucleotide sequences of 500 mouse KIAA-homologous cDNAs identified by screening of terminal sequences of cDNA clones randomly sampled from size-fractionated libraries.</title>
        <authorList>
            <person name="Okazaki N."/>
            <person name="Kikuno R."/>
            <person name="Ohara R."/>
            <person name="Inamoto S."/>
            <person name="Koseki H."/>
            <person name="Hiraoka S."/>
            <person name="Saga Y."/>
            <person name="Nagase T."/>
            <person name="Ohara O."/>
            <person name="Koga H."/>
        </authorList>
    </citation>
    <scope>NUCLEOTIDE SEQUENCE [MRNA]</scope>
    <source>
        <tissue>Embryonic tail</tissue>
    </source>
</reference>
<reference key="2">
    <citation type="journal article" date="2009" name="PLoS Biol.">
        <title>Lineage-specific biology revealed by a finished genome assembly of the mouse.</title>
        <authorList>
            <person name="Church D.M."/>
            <person name="Goodstadt L."/>
            <person name="Hillier L.W."/>
            <person name="Zody M.C."/>
            <person name="Goldstein S."/>
            <person name="She X."/>
            <person name="Bult C.J."/>
            <person name="Agarwala R."/>
            <person name="Cherry J.L."/>
            <person name="DiCuccio M."/>
            <person name="Hlavina W."/>
            <person name="Kapustin Y."/>
            <person name="Meric P."/>
            <person name="Maglott D."/>
            <person name="Birtle Z."/>
            <person name="Marques A.C."/>
            <person name="Graves T."/>
            <person name="Zhou S."/>
            <person name="Teague B."/>
            <person name="Potamousis K."/>
            <person name="Churas C."/>
            <person name="Place M."/>
            <person name="Herschleb J."/>
            <person name="Runnheim R."/>
            <person name="Forrest D."/>
            <person name="Amos-Landgraf J."/>
            <person name="Schwartz D.C."/>
            <person name="Cheng Z."/>
            <person name="Lindblad-Toh K."/>
            <person name="Eichler E.E."/>
            <person name="Ponting C.P."/>
        </authorList>
    </citation>
    <scope>NUCLEOTIDE SEQUENCE [LARGE SCALE GENOMIC DNA]</scope>
    <source>
        <strain>C57BL/6J</strain>
    </source>
</reference>
<reference key="3">
    <citation type="journal article" date="2007" name="Proc. Natl. Acad. Sci. U.S.A.">
        <title>Large-scale phosphorylation analysis of mouse liver.</title>
        <authorList>
            <person name="Villen J."/>
            <person name="Beausoleil S.A."/>
            <person name="Gerber S.A."/>
            <person name="Gygi S.P."/>
        </authorList>
    </citation>
    <scope>PHOSPHORYLATION [LARGE SCALE ANALYSIS] AT THR-261; SER-264; SER-265 AND SER-749</scope>
    <scope>IDENTIFICATION BY MASS SPECTROMETRY [LARGE SCALE ANALYSIS]</scope>
    <source>
        <tissue>Liver</tissue>
    </source>
</reference>
<reference key="4">
    <citation type="journal article" date="2010" name="Cell">
        <title>A tissue-specific atlas of mouse protein phosphorylation and expression.</title>
        <authorList>
            <person name="Huttlin E.L."/>
            <person name="Jedrychowski M.P."/>
            <person name="Elias J.E."/>
            <person name="Goswami T."/>
            <person name="Rad R."/>
            <person name="Beausoleil S.A."/>
            <person name="Villen J."/>
            <person name="Haas W."/>
            <person name="Sowa M.E."/>
            <person name="Gygi S.P."/>
        </authorList>
    </citation>
    <scope>PHOSPHORYLATION [LARGE SCALE ANALYSIS] AT SER-265; SER-269; SER-294; SER-752; SER-799 AND SER-816</scope>
    <scope>IDENTIFICATION BY MASS SPECTROMETRY [LARGE SCALE ANALYSIS]</scope>
    <source>
        <tissue>Brain</tissue>
        <tissue>Brown adipose tissue</tissue>
        <tissue>Heart</tissue>
        <tissue>Kidney</tissue>
        <tissue>Liver</tissue>
        <tissue>Lung</tissue>
        <tissue>Pancreas</tissue>
        <tissue>Spleen</tissue>
        <tissue>Testis</tissue>
    </source>
</reference>
<feature type="chain" id="PRO_0000244480" description="Testis-expressed protein 2">
    <location>
        <begin position="1"/>
        <end position="1128"/>
    </location>
</feature>
<feature type="transmembrane region" description="Helical" evidence="3">
    <location>
        <begin position="473"/>
        <end position="493"/>
    </location>
</feature>
<feature type="transmembrane region" description="Helical" evidence="3">
    <location>
        <begin position="495"/>
        <end position="515"/>
    </location>
</feature>
<feature type="domain" description="SMP-LTD" evidence="4">
    <location>
        <begin position="817"/>
        <end position="1102"/>
    </location>
</feature>
<feature type="region of interest" description="Disordered" evidence="5">
    <location>
        <begin position="1"/>
        <end position="28"/>
    </location>
</feature>
<feature type="region of interest" description="Disordered" evidence="5">
    <location>
        <begin position="71"/>
        <end position="99"/>
    </location>
</feature>
<feature type="region of interest" description="Disordered" evidence="5">
    <location>
        <begin position="130"/>
        <end position="279"/>
    </location>
</feature>
<feature type="region of interest" description="Disordered" evidence="5">
    <location>
        <begin position="345"/>
        <end position="387"/>
    </location>
</feature>
<feature type="region of interest" description="Disordered" evidence="5">
    <location>
        <begin position="645"/>
        <end position="688"/>
    </location>
</feature>
<feature type="region of interest" description="Disordered" evidence="5">
    <location>
        <begin position="716"/>
        <end position="765"/>
    </location>
</feature>
<feature type="region of interest" description="Disordered" evidence="5">
    <location>
        <begin position="787"/>
        <end position="821"/>
    </location>
</feature>
<feature type="region of interest" description="Disordered" evidence="5">
    <location>
        <begin position="945"/>
        <end position="981"/>
    </location>
</feature>
<feature type="compositionally biased region" description="Low complexity" evidence="5">
    <location>
        <begin position="130"/>
        <end position="186"/>
    </location>
</feature>
<feature type="compositionally biased region" description="Polar residues" evidence="5">
    <location>
        <begin position="248"/>
        <end position="274"/>
    </location>
</feature>
<feature type="compositionally biased region" description="Basic and acidic residues" evidence="5">
    <location>
        <begin position="364"/>
        <end position="380"/>
    </location>
</feature>
<feature type="compositionally biased region" description="Basic and acidic residues" evidence="5">
    <location>
        <begin position="645"/>
        <end position="671"/>
    </location>
</feature>
<feature type="compositionally biased region" description="Low complexity" evidence="5">
    <location>
        <begin position="736"/>
        <end position="751"/>
    </location>
</feature>
<feature type="compositionally biased region" description="Polar residues" evidence="5">
    <location>
        <begin position="796"/>
        <end position="806"/>
    </location>
</feature>
<feature type="compositionally biased region" description="Acidic residues" evidence="5">
    <location>
        <begin position="946"/>
        <end position="963"/>
    </location>
</feature>
<feature type="modified residue" description="Phosphoserine" evidence="2">
    <location>
        <position position="195"/>
    </location>
</feature>
<feature type="modified residue" description="Phosphothreonine" evidence="7">
    <location>
        <position position="261"/>
    </location>
</feature>
<feature type="modified residue" description="Phosphoserine" evidence="7">
    <location>
        <position position="264"/>
    </location>
</feature>
<feature type="modified residue" description="Phosphoserine" evidence="7 8">
    <location>
        <position position="265"/>
    </location>
</feature>
<feature type="modified residue" description="Phosphoserine" evidence="8">
    <location>
        <position position="269"/>
    </location>
</feature>
<feature type="modified residue" description="Phosphoserine" evidence="8">
    <location>
        <position position="294"/>
    </location>
</feature>
<feature type="modified residue" description="Phosphoserine" evidence="2">
    <location>
        <position position="733"/>
    </location>
</feature>
<feature type="modified residue" description="Phosphoserine" evidence="2">
    <location>
        <position position="739"/>
    </location>
</feature>
<feature type="modified residue" description="Phosphoserine" evidence="2">
    <location>
        <position position="745"/>
    </location>
</feature>
<feature type="modified residue" description="Phosphoserine" evidence="7">
    <location>
        <position position="749"/>
    </location>
</feature>
<feature type="modified residue" description="Phosphoserine" evidence="8">
    <location>
        <position position="752"/>
    </location>
</feature>
<feature type="modified residue" description="Phosphoserine" evidence="8">
    <location>
        <position position="799"/>
    </location>
</feature>
<feature type="modified residue" description="Phosphoserine" evidence="8">
    <location>
        <position position="816"/>
    </location>
</feature>
<feature type="glycosylation site" description="N-linked (GlcNAc...) asparagine" evidence="3">
    <location>
        <position position="593"/>
    </location>
</feature>